<accession>Q25AG2</accession>
<accession>A0A075F7H4</accession>
<accession>B8AV27</accession>
<comment type="function">
    <text evidence="7">Does not seem to be involved in resistance against the herbivorous insect brown planthopper (N.lugens, BPH).</text>
</comment>
<comment type="catalytic activity">
    <reaction evidence="9">
        <text>L-seryl-[protein] + ATP = O-phospho-L-seryl-[protein] + ADP + H(+)</text>
        <dbReference type="Rhea" id="RHEA:17989"/>
        <dbReference type="Rhea" id="RHEA-COMP:9863"/>
        <dbReference type="Rhea" id="RHEA-COMP:11604"/>
        <dbReference type="ChEBI" id="CHEBI:15378"/>
        <dbReference type="ChEBI" id="CHEBI:29999"/>
        <dbReference type="ChEBI" id="CHEBI:30616"/>
        <dbReference type="ChEBI" id="CHEBI:83421"/>
        <dbReference type="ChEBI" id="CHEBI:456216"/>
        <dbReference type="EC" id="2.7.11.1"/>
    </reaction>
</comment>
<comment type="catalytic activity">
    <reaction evidence="9">
        <text>L-threonyl-[protein] + ATP = O-phospho-L-threonyl-[protein] + ADP + H(+)</text>
        <dbReference type="Rhea" id="RHEA:46608"/>
        <dbReference type="Rhea" id="RHEA-COMP:11060"/>
        <dbReference type="Rhea" id="RHEA-COMP:11605"/>
        <dbReference type="ChEBI" id="CHEBI:15378"/>
        <dbReference type="ChEBI" id="CHEBI:30013"/>
        <dbReference type="ChEBI" id="CHEBI:30616"/>
        <dbReference type="ChEBI" id="CHEBI:61977"/>
        <dbReference type="ChEBI" id="CHEBI:456216"/>
        <dbReference type="EC" id="2.7.11.1"/>
    </reaction>
</comment>
<comment type="subcellular location">
    <subcellularLocation>
        <location evidence="1">Membrane</location>
        <topology evidence="1">Single-pass type I membrane protein</topology>
    </subcellularLocation>
</comment>
<comment type="similarity">
    <text evidence="4">Belongs to the protein kinase superfamily. Ser/Thr protein kinase family.</text>
</comment>
<comment type="sequence caution" evidence="9">
    <conflict type="erroneous gene model prediction">
        <sequence resource="EMBL-CDS" id="EEC76763"/>
    </conflict>
</comment>
<gene>
    <name evidence="8" type="primary">LECRK4</name>
    <name evidence="11" type="ORF">H0512B01.12</name>
    <name evidence="12" type="ORF">OsI_14845</name>
    <name evidence="10" type="ORF">OSIGBa0147O06.2</name>
</gene>
<name>LERK4_ORYSI</name>
<sequence length="804" mass="89721">MAPPLFLLSLQLLVLLSSPSAQAQNISLGTSLTTQGPNNAWLSPSGDFAFGFRPIDGNSSFYLLAIWFNKISDKTATWYAKTSEQEPQPIQVPSGSILQFTSTGVLSLRDPTNREVWNPGATGAPYASMLDTGNFVIAAAGGSTISWETFKNPTDTILVTQALSPGMKLRSRLLTTDYSNGRFLLNMETQRAALYTMAVPSGNLYDPYWSTPIDENVTNQVTNLVFNTTGRIYVSMKNGTQFNMTSGVIRSMEDYYHRATLDPDGVFRQYVYPKKPSSMSQAWTAVSIQPENICNAQTKVGSGTCGFNSYCMFDGSNNQTSCVCPEQYSFFDEVRKYRGCRPDFELQSCDLDEAASMAQYEFNLVNNVDWPQADYEWYTPIDMDECRRLCLIDCFCAVAVFHENTCWKKKLPLSNGIMGSGVQRTVLIKVPKSNSSQPELRKSRKWKSDKKLWILGSSLLLGGSVIANFALSSVLLFGTYCTITRKDVQPLQPSRDPGLPLKAFSYAELEKATDGFKEVLGTGASGIVYKGQLQDELGTYIAVKKIDKIQHETEKEFAVEVQTIGRTYHKNLVRMLGFCNEGTERLLVYEFMVNGSLNRFLFSGVRPLWSLRVQLALGVARGLLYLHEECSTQIIHCDIKPQNILLDDNFIAKISDFGLAKLLRTNQTQTYTGIRGTRGYVAPEWFKNVGITAKVDVYSFGVILLELICCRQNVEMEAAEEEQSILTYWANDCYRCGRVDLLVDGDDEAKLNIKKVERFVAVALWCLQEEPTMRPSILKVTQMLDGADAIPTPPDSSSVVNSFP</sequence>
<organism>
    <name type="scientific">Oryza sativa subsp. indica</name>
    <name type="common">Rice</name>
    <dbReference type="NCBI Taxonomy" id="39946"/>
    <lineage>
        <taxon>Eukaryota</taxon>
        <taxon>Viridiplantae</taxon>
        <taxon>Streptophyta</taxon>
        <taxon>Embryophyta</taxon>
        <taxon>Tracheophyta</taxon>
        <taxon>Spermatophyta</taxon>
        <taxon>Magnoliopsida</taxon>
        <taxon>Liliopsida</taxon>
        <taxon>Poales</taxon>
        <taxon>Poaceae</taxon>
        <taxon>BOP clade</taxon>
        <taxon>Oryzoideae</taxon>
        <taxon>Oryzeae</taxon>
        <taxon>Oryzinae</taxon>
        <taxon>Oryza</taxon>
        <taxon>Oryza sativa</taxon>
    </lineage>
</organism>
<keyword id="KW-0067">ATP-binding</keyword>
<keyword id="KW-1015">Disulfide bond</keyword>
<keyword id="KW-0245">EGF-like domain</keyword>
<keyword id="KW-0325">Glycoprotein</keyword>
<keyword id="KW-0418">Kinase</keyword>
<keyword id="KW-0430">Lectin</keyword>
<keyword id="KW-0472">Membrane</keyword>
<keyword id="KW-0547">Nucleotide-binding</keyword>
<keyword id="KW-0675">Receptor</keyword>
<keyword id="KW-1185">Reference proteome</keyword>
<keyword id="KW-0723">Serine/threonine-protein kinase</keyword>
<keyword id="KW-0732">Signal</keyword>
<keyword id="KW-0808">Transferase</keyword>
<keyword id="KW-0812">Transmembrane</keyword>
<keyword id="KW-1133">Transmembrane helix</keyword>
<protein>
    <recommendedName>
        <fullName evidence="9">G-type lectin S-receptor-like serine/threonine-protein kinase LECRK4</fullName>
        <shortName evidence="8">OsLecRK4</shortName>
        <ecNumber evidence="9">2.7.11.1</ecNumber>
    </recommendedName>
    <alternativeName>
        <fullName evidence="9">OsRLCK136</fullName>
    </alternativeName>
</protein>
<reference key="1">
    <citation type="journal article" date="2015" name="Nat. Biotechnol.">
        <title>A gene cluster encoding lectin receptor kinases confers broad-spectrum and durable insect resistance in rice.</title>
        <authorList>
            <person name="Liu Y."/>
            <person name="Wu H."/>
            <person name="Chen H."/>
            <person name="Liu Y."/>
            <person name="He J."/>
            <person name="Kang H."/>
            <person name="Sun Z."/>
            <person name="Pan G."/>
            <person name="Wang Q."/>
            <person name="Hu J."/>
            <person name="Zhou F."/>
            <person name="Zhou K."/>
            <person name="Zheng X."/>
            <person name="Ren Y."/>
            <person name="Chen L."/>
            <person name="Wang Y."/>
            <person name="Zhao Z."/>
            <person name="Lin Q."/>
            <person name="Wu F."/>
            <person name="Zhang X."/>
            <person name="Guo X."/>
            <person name="Cheng X."/>
            <person name="Jiang L."/>
            <person name="Wu C."/>
            <person name="Wang H."/>
            <person name="Wan J."/>
        </authorList>
    </citation>
    <scope>NUCLEOTIDE SEQUENCE [GENOMIC DNA]</scope>
    <scope>FUNCTION</scope>
</reference>
<reference key="2">
    <citation type="journal article" date="2002" name="Nature">
        <title>Sequence and analysis of rice chromosome 4.</title>
        <authorList>
            <person name="Feng Q."/>
            <person name="Zhang Y."/>
            <person name="Hao P."/>
            <person name="Wang S."/>
            <person name="Fu G."/>
            <person name="Huang Y."/>
            <person name="Li Y."/>
            <person name="Zhu J."/>
            <person name="Liu Y."/>
            <person name="Hu X."/>
            <person name="Jia P."/>
            <person name="Zhang Y."/>
            <person name="Zhao Q."/>
            <person name="Ying K."/>
            <person name="Yu S."/>
            <person name="Tang Y."/>
            <person name="Weng Q."/>
            <person name="Zhang L."/>
            <person name="Lu Y."/>
            <person name="Mu J."/>
            <person name="Lu Y."/>
            <person name="Zhang L.S."/>
            <person name="Yu Z."/>
            <person name="Fan D."/>
            <person name="Liu X."/>
            <person name="Lu T."/>
            <person name="Li C."/>
            <person name="Wu Y."/>
            <person name="Sun T."/>
            <person name="Lei H."/>
            <person name="Li T."/>
            <person name="Hu H."/>
            <person name="Guan J."/>
            <person name="Wu M."/>
            <person name="Zhang R."/>
            <person name="Zhou B."/>
            <person name="Chen Z."/>
            <person name="Chen L."/>
            <person name="Jin Z."/>
            <person name="Wang R."/>
            <person name="Yin H."/>
            <person name="Cai Z."/>
            <person name="Ren S."/>
            <person name="Lv G."/>
            <person name="Gu W."/>
            <person name="Zhu G."/>
            <person name="Tu Y."/>
            <person name="Jia J."/>
            <person name="Zhang Y."/>
            <person name="Chen J."/>
            <person name="Kang H."/>
            <person name="Chen X."/>
            <person name="Shao C."/>
            <person name="Sun Y."/>
            <person name="Hu Q."/>
            <person name="Zhang X."/>
            <person name="Zhang W."/>
            <person name="Wang L."/>
            <person name="Ding C."/>
            <person name="Sheng H."/>
            <person name="Gu J."/>
            <person name="Chen S."/>
            <person name="Ni L."/>
            <person name="Zhu F."/>
            <person name="Chen W."/>
            <person name="Lan L."/>
            <person name="Lai Y."/>
            <person name="Cheng Z."/>
            <person name="Gu M."/>
            <person name="Jiang J."/>
            <person name="Li J."/>
            <person name="Hong G."/>
            <person name="Xue Y."/>
            <person name="Han B."/>
        </authorList>
    </citation>
    <scope>NUCLEOTIDE SEQUENCE [LARGE SCALE GENOMIC DNA]</scope>
    <source>
        <strain>cv. Guang-Lu-Ai No.4</strain>
    </source>
</reference>
<reference key="3">
    <citation type="journal article" date="2005" name="PLoS Biol.">
        <title>The genomes of Oryza sativa: a history of duplications.</title>
        <authorList>
            <person name="Yu J."/>
            <person name="Wang J."/>
            <person name="Lin W."/>
            <person name="Li S."/>
            <person name="Li H."/>
            <person name="Zhou J."/>
            <person name="Ni P."/>
            <person name="Dong W."/>
            <person name="Hu S."/>
            <person name="Zeng C."/>
            <person name="Zhang J."/>
            <person name="Zhang Y."/>
            <person name="Li R."/>
            <person name="Xu Z."/>
            <person name="Li S."/>
            <person name="Li X."/>
            <person name="Zheng H."/>
            <person name="Cong L."/>
            <person name="Lin L."/>
            <person name="Yin J."/>
            <person name="Geng J."/>
            <person name="Li G."/>
            <person name="Shi J."/>
            <person name="Liu J."/>
            <person name="Lv H."/>
            <person name="Li J."/>
            <person name="Wang J."/>
            <person name="Deng Y."/>
            <person name="Ran L."/>
            <person name="Shi X."/>
            <person name="Wang X."/>
            <person name="Wu Q."/>
            <person name="Li C."/>
            <person name="Ren X."/>
            <person name="Wang J."/>
            <person name="Wang X."/>
            <person name="Li D."/>
            <person name="Liu D."/>
            <person name="Zhang X."/>
            <person name="Ji Z."/>
            <person name="Zhao W."/>
            <person name="Sun Y."/>
            <person name="Zhang Z."/>
            <person name="Bao J."/>
            <person name="Han Y."/>
            <person name="Dong L."/>
            <person name="Ji J."/>
            <person name="Chen P."/>
            <person name="Wu S."/>
            <person name="Liu J."/>
            <person name="Xiao Y."/>
            <person name="Bu D."/>
            <person name="Tan J."/>
            <person name="Yang L."/>
            <person name="Ye C."/>
            <person name="Zhang J."/>
            <person name="Xu J."/>
            <person name="Zhou Y."/>
            <person name="Yu Y."/>
            <person name="Zhang B."/>
            <person name="Zhuang S."/>
            <person name="Wei H."/>
            <person name="Liu B."/>
            <person name="Lei M."/>
            <person name="Yu H."/>
            <person name="Li Y."/>
            <person name="Xu H."/>
            <person name="Wei S."/>
            <person name="He X."/>
            <person name="Fang L."/>
            <person name="Zhang Z."/>
            <person name="Zhang Y."/>
            <person name="Huang X."/>
            <person name="Su Z."/>
            <person name="Tong W."/>
            <person name="Li J."/>
            <person name="Tong Z."/>
            <person name="Li S."/>
            <person name="Ye J."/>
            <person name="Wang L."/>
            <person name="Fang L."/>
            <person name="Lei T."/>
            <person name="Chen C.-S."/>
            <person name="Chen H.-C."/>
            <person name="Xu Z."/>
            <person name="Li H."/>
            <person name="Huang H."/>
            <person name="Zhang F."/>
            <person name="Xu H."/>
            <person name="Li N."/>
            <person name="Zhao C."/>
            <person name="Li S."/>
            <person name="Dong L."/>
            <person name="Huang Y."/>
            <person name="Li L."/>
            <person name="Xi Y."/>
            <person name="Qi Q."/>
            <person name="Li W."/>
            <person name="Zhang B."/>
            <person name="Hu W."/>
            <person name="Zhang Y."/>
            <person name="Tian X."/>
            <person name="Jiao Y."/>
            <person name="Liang X."/>
            <person name="Jin J."/>
            <person name="Gao L."/>
            <person name="Zheng W."/>
            <person name="Hao B."/>
            <person name="Liu S.-M."/>
            <person name="Wang W."/>
            <person name="Yuan L."/>
            <person name="Cao M."/>
            <person name="McDermott J."/>
            <person name="Samudrala R."/>
            <person name="Wang J."/>
            <person name="Wong G.K.-S."/>
            <person name="Yang H."/>
        </authorList>
    </citation>
    <scope>NUCLEOTIDE SEQUENCE [LARGE SCALE GENOMIC DNA]</scope>
    <source>
        <strain>cv. 93-11</strain>
    </source>
</reference>
<feature type="signal peptide" evidence="1">
    <location>
        <begin position="1"/>
        <end position="23"/>
    </location>
</feature>
<feature type="chain" id="PRO_0000436172" description="G-type lectin S-receptor-like serine/threonine-protein kinase LECRK4" evidence="1">
    <location>
        <begin position="24"/>
        <end position="804"/>
    </location>
</feature>
<feature type="topological domain" description="Extracellular" evidence="9">
    <location>
        <begin position="24"/>
        <end position="458"/>
    </location>
</feature>
<feature type="transmembrane region" description="Helical" evidence="1">
    <location>
        <begin position="459"/>
        <end position="479"/>
    </location>
</feature>
<feature type="topological domain" description="Cytoplasmic" evidence="9">
    <location>
        <begin position="480"/>
        <end position="804"/>
    </location>
</feature>
<feature type="domain" description="Bulb-type lectin" evidence="2">
    <location>
        <begin position="24"/>
        <end position="150"/>
    </location>
</feature>
<feature type="domain" description="EGF-like; atypical" evidence="9">
    <location>
        <begin position="290"/>
        <end position="341"/>
    </location>
</feature>
<feature type="domain" description="PAN" evidence="5">
    <location>
        <begin position="349"/>
        <end position="426"/>
    </location>
</feature>
<feature type="domain" description="Protein kinase" evidence="4">
    <location>
        <begin position="514"/>
        <end position="790"/>
    </location>
</feature>
<feature type="active site" description="Proton acceptor" evidence="4">
    <location>
        <position position="638"/>
    </location>
</feature>
<feature type="binding site" evidence="4">
    <location>
        <begin position="520"/>
        <end position="528"/>
    </location>
    <ligand>
        <name>ATP</name>
        <dbReference type="ChEBI" id="CHEBI:30616"/>
    </ligand>
</feature>
<feature type="binding site" evidence="4">
    <location>
        <position position="544"/>
    </location>
    <ligand>
        <name>ATP</name>
        <dbReference type="ChEBI" id="CHEBI:30616"/>
    </ligand>
</feature>
<feature type="glycosylation site" description="N-linked (GlcNAc...) asparagine" evidence="6">
    <location>
        <position position="25"/>
    </location>
</feature>
<feature type="glycosylation site" description="N-linked (GlcNAc...) asparagine" evidence="6">
    <location>
        <position position="58"/>
    </location>
</feature>
<feature type="glycosylation site" description="N-linked (GlcNAc...) asparagine" evidence="6">
    <location>
        <position position="216"/>
    </location>
</feature>
<feature type="glycosylation site" description="N-linked (GlcNAc...) asparagine" evidence="6">
    <location>
        <position position="227"/>
    </location>
</feature>
<feature type="glycosylation site" description="N-linked (GlcNAc...) asparagine" evidence="6">
    <location>
        <position position="238"/>
    </location>
</feature>
<feature type="glycosylation site" description="N-linked (GlcNAc...) asparagine" evidence="6">
    <location>
        <position position="243"/>
    </location>
</feature>
<feature type="glycosylation site" description="N-linked (GlcNAc...) asparagine" evidence="6">
    <location>
        <position position="318"/>
    </location>
</feature>
<feature type="glycosylation site" description="N-linked (GlcNAc...) asparagine" evidence="6">
    <location>
        <position position="434"/>
    </location>
</feature>
<feature type="disulfide bond" evidence="3">
    <location>
        <begin position="294"/>
        <end position="311"/>
    </location>
</feature>
<feature type="disulfide bond" evidence="3">
    <location>
        <begin position="305"/>
        <end position="322"/>
    </location>
</feature>
<feature type="disulfide bond" evidence="3">
    <location>
        <begin position="324"/>
        <end position="340"/>
    </location>
</feature>
<feature type="disulfide bond" evidence="5">
    <location>
        <begin position="386"/>
        <end position="406"/>
    </location>
</feature>
<feature type="disulfide bond" evidence="5">
    <location>
        <begin position="390"/>
        <end position="396"/>
    </location>
</feature>
<feature type="sequence conflict" description="In Ref. 1; AIE56246/AIE56247/AIE56248/AIE56249." evidence="9" ref="1">
    <original>D</original>
    <variation>H</variation>
    <location>
        <position position="73"/>
    </location>
</feature>
<feature type="sequence conflict" description="In Ref. 1; AIE56246/AIE56247/AIE56248/AIE56249." evidence="9" ref="1">
    <original>RK</original>
    <variation>S</variation>
    <location>
        <begin position="441"/>
        <end position="442"/>
    </location>
</feature>
<evidence type="ECO:0000255" key="1"/>
<evidence type="ECO:0000255" key="2">
    <source>
        <dbReference type="PROSITE-ProRule" id="PRU00038"/>
    </source>
</evidence>
<evidence type="ECO:0000255" key="3">
    <source>
        <dbReference type="PROSITE-ProRule" id="PRU00076"/>
    </source>
</evidence>
<evidence type="ECO:0000255" key="4">
    <source>
        <dbReference type="PROSITE-ProRule" id="PRU00159"/>
    </source>
</evidence>
<evidence type="ECO:0000255" key="5">
    <source>
        <dbReference type="PROSITE-ProRule" id="PRU00315"/>
    </source>
</evidence>
<evidence type="ECO:0000255" key="6">
    <source>
        <dbReference type="PROSITE-ProRule" id="PRU00498"/>
    </source>
</evidence>
<evidence type="ECO:0000269" key="7">
    <source>
    </source>
</evidence>
<evidence type="ECO:0000303" key="8">
    <source>
    </source>
</evidence>
<evidence type="ECO:0000305" key="9"/>
<evidence type="ECO:0000312" key="10">
    <source>
        <dbReference type="EMBL" id="CAH66272.1"/>
    </source>
</evidence>
<evidence type="ECO:0000312" key="11">
    <source>
        <dbReference type="EMBL" id="CAH67717.1"/>
    </source>
</evidence>
<evidence type="ECO:0000312" key="12">
    <source>
        <dbReference type="EMBL" id="EEC76763.1"/>
    </source>
</evidence>
<dbReference type="EC" id="2.7.11.1" evidence="9"/>
<dbReference type="EMBL" id="KF748981">
    <property type="protein sequence ID" value="AIE56246.1"/>
    <property type="molecule type" value="Genomic_DNA"/>
</dbReference>
<dbReference type="EMBL" id="KF748982">
    <property type="protein sequence ID" value="AIE56247.1"/>
    <property type="molecule type" value="Genomic_DNA"/>
</dbReference>
<dbReference type="EMBL" id="KF748983">
    <property type="protein sequence ID" value="AIE56248.1"/>
    <property type="molecule type" value="Genomic_DNA"/>
</dbReference>
<dbReference type="EMBL" id="KF748984">
    <property type="protein sequence ID" value="AIE56249.1"/>
    <property type="molecule type" value="Genomic_DNA"/>
</dbReference>
<dbReference type="EMBL" id="AL442110">
    <property type="protein sequence ID" value="CAH67717.1"/>
    <property type="molecule type" value="Genomic_DNA"/>
</dbReference>
<dbReference type="EMBL" id="CR855078">
    <property type="protein sequence ID" value="CAH66272.1"/>
    <property type="molecule type" value="Genomic_DNA"/>
</dbReference>
<dbReference type="EMBL" id="CM000129">
    <property type="protein sequence ID" value="EEC76763.1"/>
    <property type="status" value="ALT_SEQ"/>
    <property type="molecule type" value="Genomic_DNA"/>
</dbReference>
<dbReference type="SMR" id="Q25AG2"/>
<dbReference type="STRING" id="39946.Q25AG2"/>
<dbReference type="GlyCosmos" id="Q25AG2">
    <property type="glycosylation" value="8 sites, No reported glycans"/>
</dbReference>
<dbReference type="EnsemblPlants" id="OsGoSa_04g0004170.01">
    <property type="protein sequence ID" value="OsGoSa_04g0004170.01"/>
    <property type="gene ID" value="OsGoSa_04g0004170"/>
</dbReference>
<dbReference type="EnsemblPlants" id="OsIR64_04g0004280.01">
    <property type="protein sequence ID" value="OsIR64_04g0004280.01"/>
    <property type="gene ID" value="OsIR64_04g0004280"/>
</dbReference>
<dbReference type="EnsemblPlants" id="OsLima_04g0004090.01">
    <property type="protein sequence ID" value="OsLima_04g0004090.01"/>
    <property type="gene ID" value="OsLima_04g0004090"/>
</dbReference>
<dbReference type="EnsemblPlants" id="OsLiXu_Ung0016020.01">
    <property type="protein sequence ID" value="OsLiXu_Ung0016020.01"/>
    <property type="gene ID" value="OsLiXu_Ung0016020"/>
</dbReference>
<dbReference type="EnsemblPlants" id="OsZS97_04G004270_01">
    <property type="protein sequence ID" value="OsZS97_04G004270_01"/>
    <property type="gene ID" value="OsZS97_04G004270"/>
</dbReference>
<dbReference type="Gramene" id="OsGoSa_04g0004170.01">
    <property type="protein sequence ID" value="OsGoSa_04g0004170.01"/>
    <property type="gene ID" value="OsGoSa_04g0004170"/>
</dbReference>
<dbReference type="Gramene" id="OsIR64_04g0004280.01">
    <property type="protein sequence ID" value="OsIR64_04g0004280.01"/>
    <property type="gene ID" value="OsIR64_04g0004280"/>
</dbReference>
<dbReference type="Gramene" id="OsLima_04g0004090.01">
    <property type="protein sequence ID" value="OsLima_04g0004090.01"/>
    <property type="gene ID" value="OsLima_04g0004090"/>
</dbReference>
<dbReference type="Gramene" id="OsLiXu_Ung0016020.01">
    <property type="protein sequence ID" value="OsLiXu_Ung0016020.01"/>
    <property type="gene ID" value="OsLiXu_Ung0016020"/>
</dbReference>
<dbReference type="Gramene" id="OsZS97_04G004270_01">
    <property type="protein sequence ID" value="OsZS97_04G004270_01"/>
    <property type="gene ID" value="OsZS97_04G004270"/>
</dbReference>
<dbReference type="OrthoDB" id="1930390at2759"/>
<dbReference type="Proteomes" id="UP000007015">
    <property type="component" value="Chromosome 4"/>
</dbReference>
<dbReference type="GO" id="GO:0016020">
    <property type="term" value="C:membrane"/>
    <property type="evidence" value="ECO:0007669"/>
    <property type="project" value="UniProtKB-SubCell"/>
</dbReference>
<dbReference type="GO" id="GO:0005524">
    <property type="term" value="F:ATP binding"/>
    <property type="evidence" value="ECO:0007669"/>
    <property type="project" value="UniProtKB-KW"/>
</dbReference>
<dbReference type="GO" id="GO:0030246">
    <property type="term" value="F:carbohydrate binding"/>
    <property type="evidence" value="ECO:0007669"/>
    <property type="project" value="UniProtKB-KW"/>
</dbReference>
<dbReference type="GO" id="GO:0106310">
    <property type="term" value="F:protein serine kinase activity"/>
    <property type="evidence" value="ECO:0007669"/>
    <property type="project" value="RHEA"/>
</dbReference>
<dbReference type="GO" id="GO:0004674">
    <property type="term" value="F:protein serine/threonine kinase activity"/>
    <property type="evidence" value="ECO:0007669"/>
    <property type="project" value="UniProtKB-KW"/>
</dbReference>
<dbReference type="GO" id="GO:0051707">
    <property type="term" value="P:response to other organism"/>
    <property type="evidence" value="ECO:0007669"/>
    <property type="project" value="UniProtKB-ARBA"/>
</dbReference>
<dbReference type="CDD" id="cd01098">
    <property type="entry name" value="PAN_AP_plant"/>
    <property type="match status" value="1"/>
</dbReference>
<dbReference type="FunFam" id="1.10.510.10:FF:000237">
    <property type="entry name" value="G-type lectin S-receptor-like serine/threonine-protein kinase"/>
    <property type="match status" value="1"/>
</dbReference>
<dbReference type="FunFam" id="3.30.200.20:FF:000059">
    <property type="entry name" value="S-receptor-like serine/threonine-protein kinase"/>
    <property type="match status" value="1"/>
</dbReference>
<dbReference type="FunFam" id="2.90.10.10:FF:000008">
    <property type="entry name" value="Serine/threonine-protein kinase"/>
    <property type="match status" value="1"/>
</dbReference>
<dbReference type="Gene3D" id="2.90.10.10">
    <property type="entry name" value="Bulb-type lectin domain"/>
    <property type="match status" value="2"/>
</dbReference>
<dbReference type="Gene3D" id="3.30.200.20">
    <property type="entry name" value="Phosphorylase Kinase, domain 1"/>
    <property type="match status" value="1"/>
</dbReference>
<dbReference type="Gene3D" id="1.10.510.10">
    <property type="entry name" value="Transferase(Phosphotransferase) domain 1"/>
    <property type="match status" value="1"/>
</dbReference>
<dbReference type="InterPro" id="IPR001480">
    <property type="entry name" value="Bulb-type_lectin_dom"/>
</dbReference>
<dbReference type="InterPro" id="IPR036426">
    <property type="entry name" value="Bulb-type_lectin_dom_sf"/>
</dbReference>
<dbReference type="InterPro" id="IPR051343">
    <property type="entry name" value="G-type_lectin_kinases/EP1-like"/>
</dbReference>
<dbReference type="InterPro" id="IPR011009">
    <property type="entry name" value="Kinase-like_dom_sf"/>
</dbReference>
<dbReference type="InterPro" id="IPR000719">
    <property type="entry name" value="Prot_kinase_dom"/>
</dbReference>
<dbReference type="InterPro" id="IPR017441">
    <property type="entry name" value="Protein_kinase_ATP_BS"/>
</dbReference>
<dbReference type="InterPro" id="IPR008271">
    <property type="entry name" value="Ser/Thr_kinase_AS"/>
</dbReference>
<dbReference type="InterPro" id="IPR024171">
    <property type="entry name" value="SRK-like_kinase"/>
</dbReference>
<dbReference type="PANTHER" id="PTHR47976">
    <property type="entry name" value="G-TYPE LECTIN S-RECEPTOR-LIKE SERINE/THREONINE-PROTEIN KINASE SD2-5"/>
    <property type="match status" value="1"/>
</dbReference>
<dbReference type="PANTHER" id="PTHR47976:SF89">
    <property type="entry name" value="G-TYPE LECTIN S-RECEPTOR-LIKE SERINE_THREONINE-PROTEIN KINASE LECRK3"/>
    <property type="match status" value="1"/>
</dbReference>
<dbReference type="Pfam" id="PF01453">
    <property type="entry name" value="B_lectin"/>
    <property type="match status" value="1"/>
</dbReference>
<dbReference type="Pfam" id="PF00069">
    <property type="entry name" value="Pkinase"/>
    <property type="match status" value="1"/>
</dbReference>
<dbReference type="PIRSF" id="PIRSF000641">
    <property type="entry name" value="SRK"/>
    <property type="match status" value="1"/>
</dbReference>
<dbReference type="SMART" id="SM00108">
    <property type="entry name" value="B_lectin"/>
    <property type="match status" value="1"/>
</dbReference>
<dbReference type="SMART" id="SM00220">
    <property type="entry name" value="S_TKc"/>
    <property type="match status" value="1"/>
</dbReference>
<dbReference type="SUPFAM" id="SSF51110">
    <property type="entry name" value="alpha-D-mannose-specific plant lectins"/>
    <property type="match status" value="1"/>
</dbReference>
<dbReference type="SUPFAM" id="SSF56112">
    <property type="entry name" value="Protein kinase-like (PK-like)"/>
    <property type="match status" value="1"/>
</dbReference>
<dbReference type="PROSITE" id="PS50927">
    <property type="entry name" value="BULB_LECTIN"/>
    <property type="match status" value="1"/>
</dbReference>
<dbReference type="PROSITE" id="PS00107">
    <property type="entry name" value="PROTEIN_KINASE_ATP"/>
    <property type="match status" value="1"/>
</dbReference>
<dbReference type="PROSITE" id="PS50011">
    <property type="entry name" value="PROTEIN_KINASE_DOM"/>
    <property type="match status" value="1"/>
</dbReference>
<dbReference type="PROSITE" id="PS00108">
    <property type="entry name" value="PROTEIN_KINASE_ST"/>
    <property type="match status" value="1"/>
</dbReference>
<proteinExistence type="inferred from homology"/>